<comment type="sequence caution" evidence="1">
    <conflict type="erroneous gene model prediction">
        <sequence resource="EMBL-CDS" id="CAB62006"/>
    </conflict>
</comment>
<gene>
    <name type="ordered locus">At3g49040</name>
    <name type="ORF">T2J13.120</name>
</gene>
<reference key="1">
    <citation type="journal article" date="2000" name="Nature">
        <title>Sequence and analysis of chromosome 3 of the plant Arabidopsis thaliana.</title>
        <authorList>
            <person name="Salanoubat M."/>
            <person name="Lemcke K."/>
            <person name="Rieger M."/>
            <person name="Ansorge W."/>
            <person name="Unseld M."/>
            <person name="Fartmann B."/>
            <person name="Valle G."/>
            <person name="Bloecker H."/>
            <person name="Perez-Alonso M."/>
            <person name="Obermaier B."/>
            <person name="Delseny M."/>
            <person name="Boutry M."/>
            <person name="Grivell L.A."/>
            <person name="Mache R."/>
            <person name="Puigdomenech P."/>
            <person name="De Simone V."/>
            <person name="Choisne N."/>
            <person name="Artiguenave F."/>
            <person name="Robert C."/>
            <person name="Brottier P."/>
            <person name="Wincker P."/>
            <person name="Cattolico L."/>
            <person name="Weissenbach J."/>
            <person name="Saurin W."/>
            <person name="Quetier F."/>
            <person name="Schaefer M."/>
            <person name="Mueller-Auer S."/>
            <person name="Gabel C."/>
            <person name="Fuchs M."/>
            <person name="Benes V."/>
            <person name="Wurmbach E."/>
            <person name="Drzonek H."/>
            <person name="Erfle H."/>
            <person name="Jordan N."/>
            <person name="Bangert S."/>
            <person name="Wiedelmann R."/>
            <person name="Kranz H."/>
            <person name="Voss H."/>
            <person name="Holland R."/>
            <person name="Brandt P."/>
            <person name="Nyakatura G."/>
            <person name="Vezzi A."/>
            <person name="D'Angelo M."/>
            <person name="Pallavicini A."/>
            <person name="Toppo S."/>
            <person name="Simionati B."/>
            <person name="Conrad A."/>
            <person name="Hornischer K."/>
            <person name="Kauer G."/>
            <person name="Loehnert T.-H."/>
            <person name="Nordsiek G."/>
            <person name="Reichelt J."/>
            <person name="Scharfe M."/>
            <person name="Schoen O."/>
            <person name="Bargues M."/>
            <person name="Terol J."/>
            <person name="Climent J."/>
            <person name="Navarro P."/>
            <person name="Collado C."/>
            <person name="Perez-Perez A."/>
            <person name="Ottenwaelder B."/>
            <person name="Duchemin D."/>
            <person name="Cooke R."/>
            <person name="Laudie M."/>
            <person name="Berger-Llauro C."/>
            <person name="Purnelle B."/>
            <person name="Masuy D."/>
            <person name="de Haan M."/>
            <person name="Maarse A.C."/>
            <person name="Alcaraz J.-P."/>
            <person name="Cottet A."/>
            <person name="Casacuberta E."/>
            <person name="Monfort A."/>
            <person name="Argiriou A."/>
            <person name="Flores M."/>
            <person name="Liguori R."/>
            <person name="Vitale D."/>
            <person name="Mannhaupt G."/>
            <person name="Haase D."/>
            <person name="Schoof H."/>
            <person name="Rudd S."/>
            <person name="Zaccaria P."/>
            <person name="Mewes H.-W."/>
            <person name="Mayer K.F.X."/>
            <person name="Kaul S."/>
            <person name="Town C.D."/>
            <person name="Koo H.L."/>
            <person name="Tallon L.J."/>
            <person name="Jenkins J."/>
            <person name="Rooney T."/>
            <person name="Rizzo M."/>
            <person name="Walts A."/>
            <person name="Utterback T."/>
            <person name="Fujii C.Y."/>
            <person name="Shea T.P."/>
            <person name="Creasy T.H."/>
            <person name="Haas B."/>
            <person name="Maiti R."/>
            <person name="Wu D."/>
            <person name="Peterson J."/>
            <person name="Van Aken S."/>
            <person name="Pai G."/>
            <person name="Militscher J."/>
            <person name="Sellers P."/>
            <person name="Gill J.E."/>
            <person name="Feldblyum T.V."/>
            <person name="Preuss D."/>
            <person name="Lin X."/>
            <person name="Nierman W.C."/>
            <person name="Salzberg S.L."/>
            <person name="White O."/>
            <person name="Venter J.C."/>
            <person name="Fraser C.M."/>
            <person name="Kaneko T."/>
            <person name="Nakamura Y."/>
            <person name="Sato S."/>
            <person name="Kato T."/>
            <person name="Asamizu E."/>
            <person name="Sasamoto S."/>
            <person name="Kimura T."/>
            <person name="Idesawa K."/>
            <person name="Kawashima K."/>
            <person name="Kishida Y."/>
            <person name="Kiyokawa C."/>
            <person name="Kohara M."/>
            <person name="Matsumoto M."/>
            <person name="Matsuno A."/>
            <person name="Muraki A."/>
            <person name="Nakayama S."/>
            <person name="Nakazaki N."/>
            <person name="Shinpo S."/>
            <person name="Takeuchi C."/>
            <person name="Wada T."/>
            <person name="Watanabe A."/>
            <person name="Yamada M."/>
            <person name="Yasuda M."/>
            <person name="Tabata S."/>
        </authorList>
    </citation>
    <scope>NUCLEOTIDE SEQUENCE [LARGE SCALE GENOMIC DNA]</scope>
    <source>
        <strain>cv. Columbia</strain>
    </source>
</reference>
<reference key="2">
    <citation type="journal article" date="2017" name="Plant J.">
        <title>Araport11: a complete reannotation of the Arabidopsis thaliana reference genome.</title>
        <authorList>
            <person name="Cheng C.Y."/>
            <person name="Krishnakumar V."/>
            <person name="Chan A.P."/>
            <person name="Thibaud-Nissen F."/>
            <person name="Schobel S."/>
            <person name="Town C.D."/>
        </authorList>
    </citation>
    <scope>GENOME REANNOTATION</scope>
    <source>
        <strain>cv. Columbia</strain>
    </source>
</reference>
<sequence length="415" mass="48309">MEQLWLFENEDRISELHEALLVHIMSSLPTKTVVATSVLSKRWRHVWKTVQNLKFVSKYHQTFSEDVYRFFMLHKAPFLESLDLEFSNQLDASDLGILVGIAFARHVRNLVLDLDYYSNFSQLCAARFPSGLCIYDNNKTLETLTLKHSILLYFPYRVCLKSLRKLHLYKVHFYGKDSVYNLLCGCPSLRDLIVHRYRECMETFTIAVPSLERLTIEDSGFGYGCCYVINAPSLKYLNIRRFKYLNSCLIEKAPELAEAKVSDVSDIENENILESLTSAKRLSIHLSPLEWWNLLTFMLEASPKLQILKLTDLNMSSTKGNQIGQKWIQPKCVPECLLFHLETFVWTGYEWQRRDEKEVARYILRNTTSLKKATFSTKPIEPVKLKVFKKRREILNELASLGRASNPSDFVFESI</sequence>
<proteinExistence type="predicted"/>
<name>FDL19_ARATH</name>
<protein>
    <recommendedName>
        <fullName>Putative F-box/FBD/LRR-repeat protein At3g49040</fullName>
    </recommendedName>
</protein>
<keyword id="KW-0433">Leucine-rich repeat</keyword>
<keyword id="KW-1185">Reference proteome</keyword>
<keyword id="KW-0677">Repeat</keyword>
<organism>
    <name type="scientific">Arabidopsis thaliana</name>
    <name type="common">Mouse-ear cress</name>
    <dbReference type="NCBI Taxonomy" id="3702"/>
    <lineage>
        <taxon>Eukaryota</taxon>
        <taxon>Viridiplantae</taxon>
        <taxon>Streptophyta</taxon>
        <taxon>Embryophyta</taxon>
        <taxon>Tracheophyta</taxon>
        <taxon>Spermatophyta</taxon>
        <taxon>Magnoliopsida</taxon>
        <taxon>eudicotyledons</taxon>
        <taxon>Gunneridae</taxon>
        <taxon>Pentapetalae</taxon>
        <taxon>rosids</taxon>
        <taxon>malvids</taxon>
        <taxon>Brassicales</taxon>
        <taxon>Brassicaceae</taxon>
        <taxon>Camelineae</taxon>
        <taxon>Arabidopsis</taxon>
    </lineage>
</organism>
<accession>Q9SMU1</accession>
<accession>F4IWQ5</accession>
<dbReference type="EMBL" id="AL132967">
    <property type="protein sequence ID" value="CAB62006.1"/>
    <property type="status" value="ALT_SEQ"/>
    <property type="molecule type" value="Genomic_DNA"/>
</dbReference>
<dbReference type="EMBL" id="CP002686">
    <property type="status" value="NOT_ANNOTATED_CDS"/>
    <property type="molecule type" value="Genomic_DNA"/>
</dbReference>
<dbReference type="PIR" id="T46126">
    <property type="entry name" value="T46126"/>
</dbReference>
<dbReference type="FunCoup" id="Q9SMU1">
    <property type="interactions" value="2"/>
</dbReference>
<dbReference type="PaxDb" id="3702-AT3G49040.1"/>
<dbReference type="Araport" id="AT3G49040"/>
<dbReference type="TAIR" id="AT3G49040"/>
<dbReference type="HOGENOM" id="CLU_010721_1_2_1"/>
<dbReference type="InParanoid" id="Q9SMU1"/>
<dbReference type="PRO" id="PR:Q9SMU1"/>
<dbReference type="Proteomes" id="UP000006548">
    <property type="component" value="Chromosome 3"/>
</dbReference>
<dbReference type="ExpressionAtlas" id="Q9SMU1">
    <property type="expression patterns" value="baseline"/>
</dbReference>
<dbReference type="CDD" id="cd22160">
    <property type="entry name" value="F-box_AtFBL13-like"/>
    <property type="match status" value="1"/>
</dbReference>
<dbReference type="Gene3D" id="1.20.1280.50">
    <property type="match status" value="1"/>
</dbReference>
<dbReference type="Gene3D" id="3.80.10.10">
    <property type="entry name" value="Ribonuclease Inhibitor"/>
    <property type="match status" value="1"/>
</dbReference>
<dbReference type="InterPro" id="IPR036047">
    <property type="entry name" value="F-box-like_dom_sf"/>
</dbReference>
<dbReference type="InterPro" id="IPR053781">
    <property type="entry name" value="F-box_AtFBL13-like"/>
</dbReference>
<dbReference type="InterPro" id="IPR001810">
    <property type="entry name" value="F-box_dom"/>
</dbReference>
<dbReference type="InterPro" id="IPR006566">
    <property type="entry name" value="FBD"/>
</dbReference>
<dbReference type="InterPro" id="IPR050232">
    <property type="entry name" value="FBL13/AtMIF1-like"/>
</dbReference>
<dbReference type="InterPro" id="IPR032675">
    <property type="entry name" value="LRR_dom_sf"/>
</dbReference>
<dbReference type="InterPro" id="IPR055411">
    <property type="entry name" value="LRR_FXL15/At3g58940/PEG3-like"/>
</dbReference>
<dbReference type="PANTHER" id="PTHR31900:SF34">
    <property type="entry name" value="EMB|CAB62440.1-RELATED"/>
    <property type="match status" value="1"/>
</dbReference>
<dbReference type="PANTHER" id="PTHR31900">
    <property type="entry name" value="F-BOX/RNI SUPERFAMILY PROTEIN-RELATED"/>
    <property type="match status" value="1"/>
</dbReference>
<dbReference type="Pfam" id="PF00646">
    <property type="entry name" value="F-box"/>
    <property type="match status" value="1"/>
</dbReference>
<dbReference type="Pfam" id="PF08387">
    <property type="entry name" value="FBD"/>
    <property type="match status" value="1"/>
</dbReference>
<dbReference type="Pfam" id="PF24758">
    <property type="entry name" value="LRR_At5g56370"/>
    <property type="match status" value="1"/>
</dbReference>
<dbReference type="SMART" id="SM00579">
    <property type="entry name" value="FBD"/>
    <property type="match status" value="1"/>
</dbReference>
<dbReference type="SUPFAM" id="SSF81383">
    <property type="entry name" value="F-box domain"/>
    <property type="match status" value="1"/>
</dbReference>
<dbReference type="SUPFAM" id="SSF52047">
    <property type="entry name" value="RNI-like"/>
    <property type="match status" value="1"/>
</dbReference>
<evidence type="ECO:0000305" key="1"/>
<feature type="chain" id="PRO_0000283112" description="Putative F-box/FBD/LRR-repeat protein At3g49040">
    <location>
        <begin position="1"/>
        <end position="415"/>
    </location>
</feature>
<feature type="domain" description="F-box">
    <location>
        <begin position="10"/>
        <end position="58"/>
    </location>
</feature>
<feature type="repeat" description="LRR 1">
    <location>
        <begin position="60"/>
        <end position="86"/>
    </location>
</feature>
<feature type="repeat" description="LRR 2">
    <location>
        <begin position="87"/>
        <end position="114"/>
    </location>
</feature>
<feature type="repeat" description="LRR 3">
    <location>
        <begin position="143"/>
        <end position="170"/>
    </location>
</feature>
<feature type="repeat" description="LRR 4">
    <location>
        <begin position="171"/>
        <end position="196"/>
    </location>
</feature>
<feature type="repeat" description="LRR 5">
    <location>
        <begin position="213"/>
        <end position="241"/>
    </location>
</feature>
<feature type="domain" description="FBD">
    <location>
        <begin position="272"/>
        <end position="377"/>
    </location>
</feature>